<evidence type="ECO:0000255" key="1">
    <source>
        <dbReference type="HAMAP-Rule" id="MF_00362"/>
    </source>
</evidence>
<evidence type="ECO:0000305" key="2"/>
<sequence>MPLNREDKQAVVAEVSAQVAKAQTVVLAEYRGIAVGDLTKLRAKAREQQVYLRVLKNTLARRAVEGTPFAPLAEQMTGPLIYGISEDAIAAAKVVNDFSKSNEKLVIKAGSFDGKVMDKAGVQALASIPSREELLSKLLFVMQSPVSGFARALAALAEKKQAEAA</sequence>
<organism>
    <name type="scientific">Burkholderia orbicola (strain AU 1054)</name>
    <dbReference type="NCBI Taxonomy" id="331271"/>
    <lineage>
        <taxon>Bacteria</taxon>
        <taxon>Pseudomonadati</taxon>
        <taxon>Pseudomonadota</taxon>
        <taxon>Betaproteobacteria</taxon>
        <taxon>Burkholderiales</taxon>
        <taxon>Burkholderiaceae</taxon>
        <taxon>Burkholderia</taxon>
        <taxon>Burkholderia cepacia complex</taxon>
        <taxon>Burkholderia orbicola</taxon>
    </lineage>
</organism>
<name>RL10_BURO1</name>
<accession>Q1BRT8</accession>
<feature type="chain" id="PRO_1000005475" description="Large ribosomal subunit protein uL10">
    <location>
        <begin position="1"/>
        <end position="165"/>
    </location>
</feature>
<keyword id="KW-0687">Ribonucleoprotein</keyword>
<keyword id="KW-0689">Ribosomal protein</keyword>
<keyword id="KW-0694">RNA-binding</keyword>
<keyword id="KW-0699">rRNA-binding</keyword>
<dbReference type="EMBL" id="CP000378">
    <property type="protein sequence ID" value="ABF77667.1"/>
    <property type="molecule type" value="Genomic_DNA"/>
</dbReference>
<dbReference type="SMR" id="Q1BRT8"/>
<dbReference type="HOGENOM" id="CLU_092227_0_1_4"/>
<dbReference type="GO" id="GO:1990904">
    <property type="term" value="C:ribonucleoprotein complex"/>
    <property type="evidence" value="ECO:0007669"/>
    <property type="project" value="UniProtKB-KW"/>
</dbReference>
<dbReference type="GO" id="GO:0005840">
    <property type="term" value="C:ribosome"/>
    <property type="evidence" value="ECO:0007669"/>
    <property type="project" value="UniProtKB-KW"/>
</dbReference>
<dbReference type="GO" id="GO:0070180">
    <property type="term" value="F:large ribosomal subunit rRNA binding"/>
    <property type="evidence" value="ECO:0007669"/>
    <property type="project" value="UniProtKB-UniRule"/>
</dbReference>
<dbReference type="GO" id="GO:0006412">
    <property type="term" value="P:translation"/>
    <property type="evidence" value="ECO:0007669"/>
    <property type="project" value="UniProtKB-UniRule"/>
</dbReference>
<dbReference type="CDD" id="cd05797">
    <property type="entry name" value="Ribosomal_L10"/>
    <property type="match status" value="1"/>
</dbReference>
<dbReference type="Gene3D" id="3.30.70.1730">
    <property type="match status" value="1"/>
</dbReference>
<dbReference type="Gene3D" id="6.10.250.290">
    <property type="match status" value="1"/>
</dbReference>
<dbReference type="HAMAP" id="MF_00362">
    <property type="entry name" value="Ribosomal_uL10"/>
    <property type="match status" value="1"/>
</dbReference>
<dbReference type="InterPro" id="IPR001790">
    <property type="entry name" value="Ribosomal_uL10"/>
</dbReference>
<dbReference type="InterPro" id="IPR043141">
    <property type="entry name" value="Ribosomal_uL10-like_sf"/>
</dbReference>
<dbReference type="InterPro" id="IPR022973">
    <property type="entry name" value="Ribosomal_uL10_bac"/>
</dbReference>
<dbReference type="InterPro" id="IPR047865">
    <property type="entry name" value="Ribosomal_uL10_bac_type"/>
</dbReference>
<dbReference type="NCBIfam" id="NF000955">
    <property type="entry name" value="PRK00099.1-1"/>
    <property type="match status" value="1"/>
</dbReference>
<dbReference type="PANTHER" id="PTHR11560">
    <property type="entry name" value="39S RIBOSOMAL PROTEIN L10, MITOCHONDRIAL"/>
    <property type="match status" value="1"/>
</dbReference>
<dbReference type="Pfam" id="PF00466">
    <property type="entry name" value="Ribosomal_L10"/>
    <property type="match status" value="1"/>
</dbReference>
<dbReference type="SUPFAM" id="SSF160369">
    <property type="entry name" value="Ribosomal protein L10-like"/>
    <property type="match status" value="1"/>
</dbReference>
<reference key="1">
    <citation type="submission" date="2006-05" db="EMBL/GenBank/DDBJ databases">
        <title>Complete sequence of chromosome 1 of Burkholderia cenocepacia AU 1054.</title>
        <authorList>
            <consortium name="US DOE Joint Genome Institute"/>
            <person name="Copeland A."/>
            <person name="Lucas S."/>
            <person name="Lapidus A."/>
            <person name="Barry K."/>
            <person name="Detter J.C."/>
            <person name="Glavina del Rio T."/>
            <person name="Hammon N."/>
            <person name="Israni S."/>
            <person name="Dalin E."/>
            <person name="Tice H."/>
            <person name="Pitluck S."/>
            <person name="Chain P."/>
            <person name="Malfatti S."/>
            <person name="Shin M."/>
            <person name="Vergez L."/>
            <person name="Schmutz J."/>
            <person name="Larimer F."/>
            <person name="Land M."/>
            <person name="Hauser L."/>
            <person name="Kyrpides N."/>
            <person name="Lykidis A."/>
            <person name="LiPuma J.J."/>
            <person name="Konstantinidis K."/>
            <person name="Tiedje J.M."/>
            <person name="Richardson P."/>
        </authorList>
    </citation>
    <scope>NUCLEOTIDE SEQUENCE [LARGE SCALE GENOMIC DNA]</scope>
    <source>
        <strain>AU 1054</strain>
    </source>
</reference>
<comment type="function">
    <text evidence="1">Forms part of the ribosomal stalk, playing a central role in the interaction of the ribosome with GTP-bound translation factors.</text>
</comment>
<comment type="subunit">
    <text evidence="1">Part of the ribosomal stalk of the 50S ribosomal subunit. The N-terminus interacts with L11 and the large rRNA to form the base of the stalk. The C-terminus forms an elongated spine to which L12 dimers bind in a sequential fashion forming a multimeric L10(L12)X complex.</text>
</comment>
<comment type="similarity">
    <text evidence="1">Belongs to the universal ribosomal protein uL10 family.</text>
</comment>
<proteinExistence type="inferred from homology"/>
<protein>
    <recommendedName>
        <fullName evidence="1">Large ribosomal subunit protein uL10</fullName>
    </recommendedName>
    <alternativeName>
        <fullName evidence="2">50S ribosomal protein L10</fullName>
    </alternativeName>
</protein>
<gene>
    <name evidence="1" type="primary">rplJ</name>
    <name type="ordered locus">Bcen_2769</name>
</gene>